<protein>
    <recommendedName>
        <fullName>Nuclear protein localization protein 4</fullName>
    </recommendedName>
</protein>
<keyword id="KW-0963">Cytoplasm</keyword>
<keyword id="KW-0256">Endoplasmic reticulum</keyword>
<keyword id="KW-0472">Membrane</keyword>
<keyword id="KW-0509">mRNA transport</keyword>
<keyword id="KW-0539">Nucleus</keyword>
<keyword id="KW-0653">Protein transport</keyword>
<keyword id="KW-1185">Reference proteome</keyword>
<keyword id="KW-0811">Translocation</keyword>
<keyword id="KW-0813">Transport</keyword>
<gene>
    <name type="primary">npl4</name>
    <name type="ORF">An01g05330</name>
</gene>
<feature type="chain" id="PRO_0000339435" description="Nuclear protein localization protein 4">
    <location>
        <begin position="1"/>
        <end position="654"/>
    </location>
</feature>
<feature type="domain" description="MPN" evidence="2">
    <location>
        <begin position="257"/>
        <end position="394"/>
    </location>
</feature>
<feature type="region of interest" description="Disordered" evidence="3">
    <location>
        <begin position="592"/>
        <end position="654"/>
    </location>
</feature>
<feature type="compositionally biased region" description="Pro residues" evidence="3">
    <location>
        <begin position="600"/>
        <end position="613"/>
    </location>
</feature>
<feature type="compositionally biased region" description="Low complexity" evidence="3">
    <location>
        <begin position="620"/>
        <end position="631"/>
    </location>
</feature>
<feature type="compositionally biased region" description="Basic and acidic residues" evidence="3">
    <location>
        <begin position="632"/>
        <end position="645"/>
    </location>
</feature>
<sequence>MASRPIVLRFESRNGQFRLTVNPQDLFPSLQPQILERLPPNVDPSSITLSNRPIGTGGEERLLNSLDGVGFDKVGLKHGDKLFIGYQENQGQQNGTANGHITPSAGDASRRLNGAPVPQSETATIKNPWDVVQQSPLDDMLDKKDGKIKRGLDTKFCRHGPKGMCDYCMPLEPYDPKYLAEKKIKHLSFHSYLRKINASTNKAELNSSFMPPLSEPYYRVRRDCPSGHPQWPEGICTKCQPSAISLQPQEFRMVDHVEFSSPDLINSLLDFWRKSGAQRLGFLYGTYEEYKEVPLGVKAVVQAIYEPPQVDEVDGVTLHEWPNEKEVDEVAHLCGLERIGVIFTDLLDAGRGDGSVICKRHIDSYYLSSLEIAFAARMQAQHPKATKWSRTGRFGSNFVTCVLSGDEEGAISVSAYQASVAAVEMVRADIVEPSAEPSVMLVQSEDDDTENKSRYIPEVFYRKINEYGVSAQQNAKPSFPVEYLLVTLTHGFPTDASPLFTDSSFPIENREVIGESQELVHVAKKLVTHGDPDKAIQAVSDFHMLCFLHSLSTFNKDEEALLCRVATQRAPADGLQLINTPGWATLVTILQESGERPPKRPWLPTPEPYPPRSVPYNPGKRSLPSSSSSSHLRPESPKSESERLAKRFKGASLE</sequence>
<dbReference type="EMBL" id="AM269966">
    <property type="protein sequence ID" value="CAK43702.1"/>
    <property type="molecule type" value="Genomic_DNA"/>
</dbReference>
<dbReference type="SMR" id="A2Q8R9"/>
<dbReference type="EnsemblFungi" id="CAK43702">
    <property type="protein sequence ID" value="CAK43702"/>
    <property type="gene ID" value="An01g05330"/>
</dbReference>
<dbReference type="HOGENOM" id="CLU_017172_0_0_1"/>
<dbReference type="Proteomes" id="UP000006706">
    <property type="component" value="Chromosome 2R"/>
</dbReference>
<dbReference type="GO" id="GO:0005789">
    <property type="term" value="C:endoplasmic reticulum membrane"/>
    <property type="evidence" value="ECO:0007669"/>
    <property type="project" value="UniProtKB-SubCell"/>
</dbReference>
<dbReference type="GO" id="GO:0031965">
    <property type="term" value="C:nuclear membrane"/>
    <property type="evidence" value="ECO:0007669"/>
    <property type="project" value="UniProtKB-SubCell"/>
</dbReference>
<dbReference type="GO" id="GO:0048471">
    <property type="term" value="C:perinuclear region of cytoplasm"/>
    <property type="evidence" value="ECO:0007669"/>
    <property type="project" value="UniProtKB-SubCell"/>
</dbReference>
<dbReference type="GO" id="GO:0043130">
    <property type="term" value="F:ubiquitin binding"/>
    <property type="evidence" value="ECO:0007669"/>
    <property type="project" value="TreeGrafter"/>
</dbReference>
<dbReference type="GO" id="GO:0031625">
    <property type="term" value="F:ubiquitin protein ligase binding"/>
    <property type="evidence" value="ECO:0007669"/>
    <property type="project" value="TreeGrafter"/>
</dbReference>
<dbReference type="GO" id="GO:0051028">
    <property type="term" value="P:mRNA transport"/>
    <property type="evidence" value="ECO:0007669"/>
    <property type="project" value="UniProtKB-KW"/>
</dbReference>
<dbReference type="GO" id="GO:0015031">
    <property type="term" value="P:protein transport"/>
    <property type="evidence" value="ECO:0007669"/>
    <property type="project" value="UniProtKB-KW"/>
</dbReference>
<dbReference type="GO" id="GO:0006511">
    <property type="term" value="P:ubiquitin-dependent protein catabolic process"/>
    <property type="evidence" value="ECO:0007669"/>
    <property type="project" value="InterPro"/>
</dbReference>
<dbReference type="CDD" id="cd08061">
    <property type="entry name" value="MPN_NPL4"/>
    <property type="match status" value="1"/>
</dbReference>
<dbReference type="Gene3D" id="3.40.140.10">
    <property type="entry name" value="Cytidine Deaminase, domain 2"/>
    <property type="match status" value="1"/>
</dbReference>
<dbReference type="Gene3D" id="3.10.20.90">
    <property type="entry name" value="Phosphatidylinositol 3-kinase Catalytic Subunit, Chain A, domain 1"/>
    <property type="match status" value="1"/>
</dbReference>
<dbReference type="InterPro" id="IPR037518">
    <property type="entry name" value="MPN"/>
</dbReference>
<dbReference type="InterPro" id="IPR016563">
    <property type="entry name" value="Npl4"/>
</dbReference>
<dbReference type="InterPro" id="IPR007717">
    <property type="entry name" value="NPL4_C"/>
</dbReference>
<dbReference type="InterPro" id="IPR007716">
    <property type="entry name" value="NPL4_Zn-bd_put"/>
</dbReference>
<dbReference type="InterPro" id="IPR029071">
    <property type="entry name" value="Ubiquitin-like_domsf"/>
</dbReference>
<dbReference type="PANTHER" id="PTHR12710">
    <property type="entry name" value="NUCLEAR PROTEIN LOCALIZATION 4"/>
    <property type="match status" value="1"/>
</dbReference>
<dbReference type="PANTHER" id="PTHR12710:SF0">
    <property type="entry name" value="NUCLEAR PROTEIN LOCALIZATION PROTEIN 4 HOMOLOG"/>
    <property type="match status" value="1"/>
</dbReference>
<dbReference type="Pfam" id="PF05021">
    <property type="entry name" value="NPL4"/>
    <property type="match status" value="1"/>
</dbReference>
<dbReference type="Pfam" id="PF05020">
    <property type="entry name" value="zf-NPL4"/>
    <property type="match status" value="1"/>
</dbReference>
<dbReference type="PIRSF" id="PIRSF010052">
    <property type="entry name" value="Polyub_prc_Npl4"/>
    <property type="match status" value="1"/>
</dbReference>
<dbReference type="SUPFAM" id="SSF54236">
    <property type="entry name" value="Ubiquitin-like"/>
    <property type="match status" value="1"/>
</dbReference>
<dbReference type="PROSITE" id="PS50249">
    <property type="entry name" value="MPN"/>
    <property type="match status" value="1"/>
</dbReference>
<proteinExistence type="inferred from homology"/>
<accession>A2Q8R9</accession>
<evidence type="ECO:0000250" key="1"/>
<evidence type="ECO:0000255" key="2">
    <source>
        <dbReference type="PROSITE-ProRule" id="PRU01182"/>
    </source>
</evidence>
<evidence type="ECO:0000256" key="3">
    <source>
        <dbReference type="SAM" id="MobiDB-lite"/>
    </source>
</evidence>
<evidence type="ECO:0000305" key="4"/>
<reference key="1">
    <citation type="journal article" date="2007" name="Nat. Biotechnol.">
        <title>Genome sequencing and analysis of the versatile cell factory Aspergillus niger CBS 513.88.</title>
        <authorList>
            <person name="Pel H.J."/>
            <person name="de Winde J.H."/>
            <person name="Archer D.B."/>
            <person name="Dyer P.S."/>
            <person name="Hofmann G."/>
            <person name="Schaap P.J."/>
            <person name="Turner G."/>
            <person name="de Vries R.P."/>
            <person name="Albang R."/>
            <person name="Albermann K."/>
            <person name="Andersen M.R."/>
            <person name="Bendtsen J.D."/>
            <person name="Benen J.A.E."/>
            <person name="van den Berg M."/>
            <person name="Breestraat S."/>
            <person name="Caddick M.X."/>
            <person name="Contreras R."/>
            <person name="Cornell M."/>
            <person name="Coutinho P.M."/>
            <person name="Danchin E.G.J."/>
            <person name="Debets A.J.M."/>
            <person name="Dekker P."/>
            <person name="van Dijck P.W.M."/>
            <person name="van Dijk A."/>
            <person name="Dijkhuizen L."/>
            <person name="Driessen A.J.M."/>
            <person name="d'Enfert C."/>
            <person name="Geysens S."/>
            <person name="Goosen C."/>
            <person name="Groot G.S.P."/>
            <person name="de Groot P.W.J."/>
            <person name="Guillemette T."/>
            <person name="Henrissat B."/>
            <person name="Herweijer M."/>
            <person name="van den Hombergh J.P.T.W."/>
            <person name="van den Hondel C.A.M.J.J."/>
            <person name="van der Heijden R.T.J.M."/>
            <person name="van der Kaaij R.M."/>
            <person name="Klis F.M."/>
            <person name="Kools H.J."/>
            <person name="Kubicek C.P."/>
            <person name="van Kuyk P.A."/>
            <person name="Lauber J."/>
            <person name="Lu X."/>
            <person name="van der Maarel M.J.E.C."/>
            <person name="Meulenberg R."/>
            <person name="Menke H."/>
            <person name="Mortimer M.A."/>
            <person name="Nielsen J."/>
            <person name="Oliver S.G."/>
            <person name="Olsthoorn M."/>
            <person name="Pal K."/>
            <person name="van Peij N.N.M.E."/>
            <person name="Ram A.F.J."/>
            <person name="Rinas U."/>
            <person name="Roubos J.A."/>
            <person name="Sagt C.M.J."/>
            <person name="Schmoll M."/>
            <person name="Sun J."/>
            <person name="Ussery D."/>
            <person name="Varga J."/>
            <person name="Vervecken W."/>
            <person name="van de Vondervoort P.J.J."/>
            <person name="Wedler H."/>
            <person name="Woesten H.A.B."/>
            <person name="Zeng A.-P."/>
            <person name="van Ooyen A.J.J."/>
            <person name="Visser J."/>
            <person name="Stam H."/>
        </authorList>
    </citation>
    <scope>NUCLEOTIDE SEQUENCE [LARGE SCALE GENOMIC DNA]</scope>
    <source>
        <strain>ATCC MYA-4892 / CBS 513.88 / FGSC A1513</strain>
    </source>
</reference>
<name>NPL4_ASPNC</name>
<comment type="function">
    <text evidence="1">Involved in the import of nuclear-targeted proteins into the nucleus and the export of poly(A) RNA out of the nucleus. Has a role in the endoplasmic reticulum-associated degradation (ERAD) pathway (By similarity).</text>
</comment>
<comment type="subcellular location">
    <subcellularLocation>
        <location evidence="1">Cytoplasm</location>
        <location evidence="1">Perinuclear region</location>
    </subcellularLocation>
    <subcellularLocation>
        <location evidence="1">Endoplasmic reticulum membrane</location>
        <topology evidence="1">Peripheral membrane protein</topology>
        <orientation evidence="1">Cytoplasmic side</orientation>
    </subcellularLocation>
    <subcellularLocation>
        <location evidence="1">Nucleus membrane</location>
        <topology evidence="1">Peripheral membrane protein</topology>
        <orientation evidence="1">Cytoplasmic side</orientation>
    </subcellularLocation>
    <text evidence="1">Localizes mainly at the nuclear periphery and the endoplasmic reticulum membrane.</text>
</comment>
<comment type="similarity">
    <text evidence="4">Belongs to the NPL4 family.</text>
</comment>
<organism>
    <name type="scientific">Aspergillus niger (strain ATCC MYA-4892 / CBS 513.88 / FGSC A1513)</name>
    <dbReference type="NCBI Taxonomy" id="425011"/>
    <lineage>
        <taxon>Eukaryota</taxon>
        <taxon>Fungi</taxon>
        <taxon>Dikarya</taxon>
        <taxon>Ascomycota</taxon>
        <taxon>Pezizomycotina</taxon>
        <taxon>Eurotiomycetes</taxon>
        <taxon>Eurotiomycetidae</taxon>
        <taxon>Eurotiales</taxon>
        <taxon>Aspergillaceae</taxon>
        <taxon>Aspergillus</taxon>
        <taxon>Aspergillus subgen. Circumdati</taxon>
    </lineage>
</organism>